<name>NRT22_CHLRE</name>
<comment type="function">
    <text evidence="3 4">Involved in nitrate transport, but does not seem to be able to mediate transport by its own (PubMed:8180624). Acts as a dual component transporter with NAR2 (system 2) (PubMed:8180624). Involved in a high affinity transport specific for nitrate (PubMed:8567664).</text>
</comment>
<comment type="subcellular location">
    <subcellularLocation>
        <location evidence="8">Cell membrane</location>
        <topology evidence="1">Multi-pass membrane protein</topology>
    </subcellularLocation>
</comment>
<comment type="induction">
    <text evidence="2 5">Up-regulated after a long nitrate induction period.</text>
</comment>
<comment type="similarity">
    <text evidence="8">Belongs to the major facilitator superfamily. Nitrate/nitrite porter (TC 2.A.1.8) family.</text>
</comment>
<comment type="sequence caution" evidence="8">
    <conflict type="erroneous gene model prediction">
        <sequence resource="EMBL-CDS" id="EDP00896"/>
    </conflict>
</comment>
<keyword id="KW-1003">Cell membrane</keyword>
<keyword id="KW-0472">Membrane</keyword>
<keyword id="KW-0534">Nitrate assimilation</keyword>
<keyword id="KW-0812">Transmembrane</keyword>
<keyword id="KW-1133">Transmembrane helix</keyword>
<keyword id="KW-0813">Transport</keyword>
<organism evidence="9">
    <name type="scientific">Chlamydomonas reinhardtii</name>
    <name type="common">Chlamydomonas smithii</name>
    <dbReference type="NCBI Taxonomy" id="3055"/>
    <lineage>
        <taxon>Eukaryota</taxon>
        <taxon>Viridiplantae</taxon>
        <taxon>Chlorophyta</taxon>
        <taxon>core chlorophytes</taxon>
        <taxon>Chlorophyceae</taxon>
        <taxon>CS clade</taxon>
        <taxon>Chlamydomonadales</taxon>
        <taxon>Chlamydomonadaceae</taxon>
        <taxon>Chlamydomonas</taxon>
    </lineage>
</organism>
<reference key="1">
    <citation type="journal article" date="2007" name="Science">
        <title>The Chlamydomonas genome reveals the evolution of key animal and plant functions.</title>
        <authorList>
            <person name="Merchant S.S."/>
            <person name="Prochnik S.E."/>
            <person name="Vallon O."/>
            <person name="Harris E.H."/>
            <person name="Karpowicz S.J."/>
            <person name="Witman G.B."/>
            <person name="Terry A."/>
            <person name="Salamov A."/>
            <person name="Fritz-Laylin L.K."/>
            <person name="Marechal-Drouard L."/>
            <person name="Marshall W.F."/>
            <person name="Qu L.H."/>
            <person name="Nelson D.R."/>
            <person name="Sanderfoot A.A."/>
            <person name="Spalding M.H."/>
            <person name="Kapitonov V.V."/>
            <person name="Ren Q."/>
            <person name="Ferris P."/>
            <person name="Lindquist E."/>
            <person name="Shapiro H."/>
            <person name="Lucas S.M."/>
            <person name="Grimwood J."/>
            <person name="Schmutz J."/>
            <person name="Cardol P."/>
            <person name="Cerutti H."/>
            <person name="Chanfreau G."/>
            <person name="Chen C.L."/>
            <person name="Cognat V."/>
            <person name="Croft M.T."/>
            <person name="Dent R."/>
            <person name="Dutcher S."/>
            <person name="Fernandez E."/>
            <person name="Fukuzawa H."/>
            <person name="Gonzalez-Ballester D."/>
            <person name="Gonzalez-Halphen D."/>
            <person name="Hallmann A."/>
            <person name="Hanikenne M."/>
            <person name="Hippler M."/>
            <person name="Inwood W."/>
            <person name="Jabbari K."/>
            <person name="Kalanon M."/>
            <person name="Kuras R."/>
            <person name="Lefebvre P.A."/>
            <person name="Lemaire S.D."/>
            <person name="Lobanov A.V."/>
            <person name="Lohr M."/>
            <person name="Manuell A."/>
            <person name="Meier I."/>
            <person name="Mets L."/>
            <person name="Mittag M."/>
            <person name="Mittelmeier T."/>
            <person name="Moroney J.V."/>
            <person name="Moseley J."/>
            <person name="Napoli C."/>
            <person name="Nedelcu A.M."/>
            <person name="Niyogi K."/>
            <person name="Novoselov S.V."/>
            <person name="Paulsen I.T."/>
            <person name="Pazour G.J."/>
            <person name="Purton S."/>
            <person name="Ral J.P."/>
            <person name="Riano-Pachon D.M."/>
            <person name="Riekhof W."/>
            <person name="Rymarquis L."/>
            <person name="Schroda M."/>
            <person name="Stern D."/>
            <person name="Umen J."/>
            <person name="Willows R."/>
            <person name="Wilson N."/>
            <person name="Zimmer S.L."/>
            <person name="Allmer J."/>
            <person name="Balk J."/>
            <person name="Bisova K."/>
            <person name="Chen C.J."/>
            <person name="Elias M."/>
            <person name="Gendler K."/>
            <person name="Hauser C."/>
            <person name="Lamb M.R."/>
            <person name="Ledford H."/>
            <person name="Long J.C."/>
            <person name="Minagawa J."/>
            <person name="Page M.D."/>
            <person name="Pan J."/>
            <person name="Pootakham W."/>
            <person name="Roje S."/>
            <person name="Rose A."/>
            <person name="Stahlberg E."/>
            <person name="Terauchi A.M."/>
            <person name="Yang P."/>
            <person name="Ball S."/>
            <person name="Bowler C."/>
            <person name="Dieckmann C.L."/>
            <person name="Gladyshev V.N."/>
            <person name="Green P."/>
            <person name="Jorgensen R."/>
            <person name="Mayfield S."/>
            <person name="Mueller-Roeber B."/>
            <person name="Rajamani S."/>
            <person name="Sayre R.T."/>
            <person name="Brokstein P."/>
            <person name="Dubchak I."/>
            <person name="Goodstein D."/>
            <person name="Hornick L."/>
            <person name="Huang Y.W."/>
            <person name="Jhaveri J."/>
            <person name="Luo Y."/>
            <person name="Martinez D."/>
            <person name="Ngau W.C."/>
            <person name="Otillar B."/>
            <person name="Poliakov A."/>
            <person name="Porter A."/>
            <person name="Szajkowski L."/>
            <person name="Werner G."/>
            <person name="Zhou K."/>
            <person name="Grigoriev I.V."/>
            <person name="Rokhsar D.S."/>
            <person name="Grossman A.R."/>
        </authorList>
    </citation>
    <scope>NUCLEOTIDE SEQUENCE [LARGE SCALE GENOMIC DNA]</scope>
    <source>
        <strain>CC-503</strain>
    </source>
</reference>
<reference key="2">
    <citation type="journal article" date="1994" name="Plant J.">
        <title>Identification of nitrate transporter genes in Chlamydomonas reinhardtii.</title>
        <authorList>
            <person name="Quesada A."/>
            <person name="Galvan A."/>
            <person name="Fernandez E."/>
        </authorList>
    </citation>
    <scope>NUCLEOTIDE SEQUENCE [MRNA] OF 276-513</scope>
    <scope>FUNCTION</scope>
    <source>
        <strain>21gr / CC-1690</strain>
    </source>
</reference>
<reference key="3">
    <citation type="journal article" date="1994" name="Plant Mol. Biol.">
        <title>Expression of nitrate assimilation related genes in Chlamydomonas reinhardtii.</title>
        <authorList>
            <person name="Quesada A."/>
            <person name="Fernandez E."/>
        </authorList>
    </citation>
    <scope>INDUCTION BY NITRATE</scope>
</reference>
<reference key="4">
    <citation type="journal article" date="1996" name="J. Biol. Chem.">
        <title>Nitrate and nitrite are transported by different specific transport systems and by a bispecific transporter in Chlamydomonas reinhardtii.</title>
        <authorList>
            <person name="Galvan A."/>
            <person name="Quesada A."/>
            <person name="Fernandez E."/>
        </authorList>
    </citation>
    <scope>FUNCTION</scope>
</reference>
<reference key="5">
    <citation type="journal article" date="1998" name="Mol. Gen. Genet.">
        <title>Three Nrt2 genes are differentially regulated in Chlamydomonas reinhardtii.</title>
        <authorList>
            <person name="Quesada A."/>
            <person name="Hidalgo J."/>
            <person name="Fernandez E."/>
        </authorList>
    </citation>
    <scope>INDUCTION BY NITRATE</scope>
</reference>
<proteinExistence type="evidence at transcript level"/>
<protein>
    <recommendedName>
        <fullName evidence="7">Nitrate transporter 2.2</fullName>
    </recommendedName>
    <alternativeName>
        <fullName evidence="6">Nitrate assimilation related protein 4</fullName>
    </alternativeName>
</protein>
<gene>
    <name evidence="7" type="primary">NRT2.2</name>
    <name evidence="6" type="synonym">NAR-4</name>
    <name evidence="7" type="synonym">NAR4</name>
    <name evidence="10" type="ORF">CHLREDRAFT_192088</name>
</gene>
<accession>Q39609</accession>
<accession>A8J4P3</accession>
<sequence length="513" mass="55790">MATVEKKYPYALDSEGKAKYVPVWRFTQPHMMAFHLSWICFFMSFVATFAPASLAPVIRDDLFLTKSEVGNAGVSAVCGAIAARLFMGIFVDVVGPRYGAAAAMLMTAPAVFCMALVTDFSTFACVRFFIGLSLCMFVCCQFWCGTMFNVQIVGTANAIAAGWGNMGGGACHFIMPLIYQGIKDGGVPGYQAWRWAFFVPGGIYIVTATLTLLLGIDHPSGKDYRDLKKEGTLKAKGNMWPVIKCGLGNYRSWILALTYGYSFGVELTVDNVIVEYLFDQFGLNLAVAGALGAIFGLMNIFSRATGGMISDLIAKPFGMRGRLWVLWITQTLGGIFCIIMGKVSNSLTATIVIMIIFSIFCQQACGMHFGITPFVSRRAYGVVSGLVGAGGNVGAAITQAIWFSGTATWQINLSRPDSFVWMGVQAVALTVAVMFIWFPMWGSMFTGPREGVEEEDYYLREWSAEEVAQGLHQGSMRFAMESKSQRGYKDKRMLDAVGETASADVAAVKATVA</sequence>
<feature type="chain" id="PRO_0000438981" description="Nitrate transporter 2.2">
    <location>
        <begin position="1"/>
        <end position="513"/>
    </location>
</feature>
<feature type="transmembrane region" description="Helical" evidence="1">
    <location>
        <begin position="38"/>
        <end position="58"/>
    </location>
</feature>
<feature type="transmembrane region" description="Helical" evidence="1">
    <location>
        <begin position="74"/>
        <end position="94"/>
    </location>
</feature>
<feature type="transmembrane region" description="Helical" evidence="1">
    <location>
        <begin position="98"/>
        <end position="118"/>
    </location>
</feature>
<feature type="transmembrane region" description="Helical" evidence="1">
    <location>
        <begin position="128"/>
        <end position="148"/>
    </location>
</feature>
<feature type="transmembrane region" description="Helical" evidence="1">
    <location>
        <begin position="158"/>
        <end position="178"/>
    </location>
</feature>
<feature type="transmembrane region" description="Helical" evidence="1">
    <location>
        <begin position="196"/>
        <end position="216"/>
    </location>
</feature>
<feature type="transmembrane region" description="Helical" evidence="1">
    <location>
        <begin position="247"/>
        <end position="265"/>
    </location>
</feature>
<feature type="transmembrane region" description="Helical" evidence="1">
    <location>
        <begin position="281"/>
        <end position="301"/>
    </location>
</feature>
<feature type="transmembrane region" description="Helical" evidence="1">
    <location>
        <begin position="323"/>
        <end position="343"/>
    </location>
</feature>
<feature type="transmembrane region" description="Helical" evidence="1">
    <location>
        <begin position="351"/>
        <end position="371"/>
    </location>
</feature>
<feature type="transmembrane region" description="Helical" evidence="1">
    <location>
        <begin position="383"/>
        <end position="403"/>
    </location>
</feature>
<feature type="transmembrane region" description="Helical" evidence="1">
    <location>
        <begin position="419"/>
        <end position="439"/>
    </location>
</feature>
<dbReference type="EMBL" id="DS496137">
    <property type="protein sequence ID" value="EDP00896.1"/>
    <property type="status" value="ALT_SEQ"/>
    <property type="molecule type" value="Genomic_DNA"/>
</dbReference>
<dbReference type="EMBL" id="Z25439">
    <property type="protein sequence ID" value="CAA80926.1"/>
    <property type="molecule type" value="mRNA"/>
</dbReference>
<dbReference type="PIR" id="S40143">
    <property type="entry name" value="S40143"/>
</dbReference>
<dbReference type="SMR" id="Q39609"/>
<dbReference type="TCDB" id="2.A.1.8.7">
    <property type="family name" value="the major facilitator superfamily (mfs)"/>
</dbReference>
<dbReference type="PaxDb" id="3055-EDP00896"/>
<dbReference type="EnsemblPlants" id="PNW79321">
    <property type="protein sequence ID" value="PNW79321"/>
    <property type="gene ID" value="CHLRE_09g410800v5"/>
</dbReference>
<dbReference type="Gramene" id="PNW79321">
    <property type="protein sequence ID" value="PNW79321"/>
    <property type="gene ID" value="CHLRE_09g410800v5"/>
</dbReference>
<dbReference type="KEGG" id="cre:CHLRE_09g410800v5"/>
<dbReference type="eggNOG" id="ENOG502QPIC">
    <property type="taxonomic scope" value="Eukaryota"/>
</dbReference>
<dbReference type="OMA" id="ILWILQT"/>
<dbReference type="OrthoDB" id="434240at2759"/>
<dbReference type="GO" id="GO:0005886">
    <property type="term" value="C:plasma membrane"/>
    <property type="evidence" value="ECO:0007669"/>
    <property type="project" value="UniProtKB-SubCell"/>
</dbReference>
<dbReference type="GO" id="GO:1990351">
    <property type="term" value="C:transporter complex"/>
    <property type="evidence" value="ECO:0000315"/>
    <property type="project" value="UniProtKB"/>
</dbReference>
<dbReference type="GO" id="GO:0015112">
    <property type="term" value="F:nitrate transmembrane transporter activity"/>
    <property type="evidence" value="ECO:0007669"/>
    <property type="project" value="InterPro"/>
</dbReference>
<dbReference type="GO" id="GO:0015113">
    <property type="term" value="F:nitrite transmembrane transporter activity"/>
    <property type="evidence" value="ECO:0007669"/>
    <property type="project" value="InterPro"/>
</dbReference>
<dbReference type="GO" id="GO:0042128">
    <property type="term" value="P:nitrate assimilation"/>
    <property type="evidence" value="ECO:0007669"/>
    <property type="project" value="UniProtKB-KW"/>
</dbReference>
<dbReference type="GO" id="GO:0015706">
    <property type="term" value="P:nitrate transmembrane transport"/>
    <property type="evidence" value="ECO:0000314"/>
    <property type="project" value="UniProtKB"/>
</dbReference>
<dbReference type="CDD" id="cd17341">
    <property type="entry name" value="MFS_NRT2_like"/>
    <property type="match status" value="1"/>
</dbReference>
<dbReference type="FunFam" id="1.20.1250.20:FF:000053">
    <property type="entry name" value="Nitrate transporter 2.1"/>
    <property type="match status" value="1"/>
</dbReference>
<dbReference type="Gene3D" id="1.20.1250.20">
    <property type="entry name" value="MFS general substrate transporter like domains"/>
    <property type="match status" value="2"/>
</dbReference>
<dbReference type="InterPro" id="IPR011701">
    <property type="entry name" value="MFS"/>
</dbReference>
<dbReference type="InterPro" id="IPR036259">
    <property type="entry name" value="MFS_trans_sf"/>
</dbReference>
<dbReference type="InterPro" id="IPR044772">
    <property type="entry name" value="NO3_transporter"/>
</dbReference>
<dbReference type="InterPro" id="IPR004737">
    <property type="entry name" value="NO3_transporter_NarK/NarU-like"/>
</dbReference>
<dbReference type="NCBIfam" id="TIGR00886">
    <property type="entry name" value="2A0108"/>
    <property type="match status" value="1"/>
</dbReference>
<dbReference type="PANTHER" id="PTHR23515">
    <property type="entry name" value="HIGH-AFFINITY NITRATE TRANSPORTER 2.3"/>
    <property type="match status" value="1"/>
</dbReference>
<dbReference type="Pfam" id="PF07690">
    <property type="entry name" value="MFS_1"/>
    <property type="match status" value="1"/>
</dbReference>
<dbReference type="SUPFAM" id="SSF103473">
    <property type="entry name" value="MFS general substrate transporter"/>
    <property type="match status" value="1"/>
</dbReference>
<evidence type="ECO:0000255" key="1"/>
<evidence type="ECO:0000269" key="2">
    <source>
    </source>
</evidence>
<evidence type="ECO:0000269" key="3">
    <source>
    </source>
</evidence>
<evidence type="ECO:0000269" key="4">
    <source>
    </source>
</evidence>
<evidence type="ECO:0000269" key="5">
    <source>
    </source>
</evidence>
<evidence type="ECO:0000303" key="6">
    <source>
    </source>
</evidence>
<evidence type="ECO:0000303" key="7">
    <source>
    </source>
</evidence>
<evidence type="ECO:0000305" key="8"/>
<evidence type="ECO:0000312" key="9">
    <source>
        <dbReference type="EMBL" id="CAA80926.1"/>
    </source>
</evidence>
<evidence type="ECO:0000312" key="10">
    <source>
        <dbReference type="EMBL" id="EDP00896.1"/>
    </source>
</evidence>